<gene>
    <name evidence="1" type="primary">dsbB</name>
    <name type="ordered locus">PsycPRwf_0045</name>
</gene>
<protein>
    <recommendedName>
        <fullName evidence="1">Disulfide bond formation protein B</fullName>
    </recommendedName>
    <alternativeName>
        <fullName evidence="1">Disulfide oxidoreductase</fullName>
    </alternativeName>
</protein>
<evidence type="ECO:0000255" key="1">
    <source>
        <dbReference type="HAMAP-Rule" id="MF_00286"/>
    </source>
</evidence>
<reference key="1">
    <citation type="submission" date="2007-05" db="EMBL/GenBank/DDBJ databases">
        <title>Complete sequence of chromosome of Psychrobacter sp. PRwf-1.</title>
        <authorList>
            <consortium name="US DOE Joint Genome Institute"/>
            <person name="Copeland A."/>
            <person name="Lucas S."/>
            <person name="Lapidus A."/>
            <person name="Barry K."/>
            <person name="Detter J.C."/>
            <person name="Glavina del Rio T."/>
            <person name="Hammon N."/>
            <person name="Israni S."/>
            <person name="Dalin E."/>
            <person name="Tice H."/>
            <person name="Pitluck S."/>
            <person name="Chain P."/>
            <person name="Malfatti S."/>
            <person name="Shin M."/>
            <person name="Vergez L."/>
            <person name="Schmutz J."/>
            <person name="Larimer F."/>
            <person name="Land M."/>
            <person name="Hauser L."/>
            <person name="Kyrpides N."/>
            <person name="Kim E."/>
            <person name="Tiedje J."/>
            <person name="Richardson P."/>
        </authorList>
    </citation>
    <scope>NUCLEOTIDE SEQUENCE [LARGE SCALE GENOMIC DNA]</scope>
    <source>
        <strain>PRwf-1</strain>
    </source>
</reference>
<comment type="function">
    <text evidence="1">Required for disulfide bond formation in some periplasmic proteins. Acts by oxidizing the DsbA protein.</text>
</comment>
<comment type="subcellular location">
    <subcellularLocation>
        <location evidence="1">Cell inner membrane</location>
        <topology evidence="1">Multi-pass membrane protein</topology>
    </subcellularLocation>
</comment>
<comment type="similarity">
    <text evidence="1">Belongs to the DsbB family.</text>
</comment>
<organism>
    <name type="scientific">Psychrobacter sp. (strain PRwf-1)</name>
    <dbReference type="NCBI Taxonomy" id="349106"/>
    <lineage>
        <taxon>Bacteria</taxon>
        <taxon>Pseudomonadati</taxon>
        <taxon>Pseudomonadota</taxon>
        <taxon>Gammaproteobacteria</taxon>
        <taxon>Moraxellales</taxon>
        <taxon>Moraxellaceae</taxon>
        <taxon>Psychrobacter</taxon>
    </lineage>
</organism>
<keyword id="KW-0997">Cell inner membrane</keyword>
<keyword id="KW-1003">Cell membrane</keyword>
<keyword id="KW-0143">Chaperone</keyword>
<keyword id="KW-1015">Disulfide bond</keyword>
<keyword id="KW-0249">Electron transport</keyword>
<keyword id="KW-0472">Membrane</keyword>
<keyword id="KW-0560">Oxidoreductase</keyword>
<keyword id="KW-0676">Redox-active center</keyword>
<keyword id="KW-0812">Transmembrane</keyword>
<keyword id="KW-1133">Transmembrane helix</keyword>
<keyword id="KW-0813">Transport</keyword>
<proteinExistence type="inferred from homology"/>
<sequence>MQRLLTYRALNFILFIASVVAMLFAIIFLQNYKGLEPCPLCIFQRIGLMVMGGFSLIAAVGHPKKMGMQLLLWIGSMAGILWSAGVAARHVWIQHLPADQVPACGPGLDYFLEALPMKQVINQVLSGSGECAEISWRFLGLSIPEQALILFTALILVNLLVLWRIISKRTA</sequence>
<name>DSBB_PSYWF</name>
<dbReference type="EMBL" id="CP000713">
    <property type="protein sequence ID" value="ABQ93005.1"/>
    <property type="molecule type" value="Genomic_DNA"/>
</dbReference>
<dbReference type="SMR" id="A5WBG4"/>
<dbReference type="STRING" id="349106.PsycPRwf_0045"/>
<dbReference type="KEGG" id="prw:PsycPRwf_0045"/>
<dbReference type="eggNOG" id="COG1495">
    <property type="taxonomic scope" value="Bacteria"/>
</dbReference>
<dbReference type="HOGENOM" id="CLU_098660_1_1_6"/>
<dbReference type="GO" id="GO:0005886">
    <property type="term" value="C:plasma membrane"/>
    <property type="evidence" value="ECO:0007669"/>
    <property type="project" value="UniProtKB-SubCell"/>
</dbReference>
<dbReference type="GO" id="GO:0009055">
    <property type="term" value="F:electron transfer activity"/>
    <property type="evidence" value="ECO:0007669"/>
    <property type="project" value="UniProtKB-UniRule"/>
</dbReference>
<dbReference type="GO" id="GO:0015035">
    <property type="term" value="F:protein-disulfide reductase activity"/>
    <property type="evidence" value="ECO:0007669"/>
    <property type="project" value="UniProtKB-UniRule"/>
</dbReference>
<dbReference type="GO" id="GO:0006457">
    <property type="term" value="P:protein folding"/>
    <property type="evidence" value="ECO:0007669"/>
    <property type="project" value="InterPro"/>
</dbReference>
<dbReference type="Gene3D" id="1.20.1550.10">
    <property type="entry name" value="DsbB-like"/>
    <property type="match status" value="1"/>
</dbReference>
<dbReference type="HAMAP" id="MF_00286">
    <property type="entry name" value="DsbB"/>
    <property type="match status" value="1"/>
</dbReference>
<dbReference type="InterPro" id="IPR003752">
    <property type="entry name" value="DiS_bond_form_DsbB/BdbC"/>
</dbReference>
<dbReference type="InterPro" id="IPR022920">
    <property type="entry name" value="Disulphide_bond_form_DsbB"/>
</dbReference>
<dbReference type="InterPro" id="IPR050183">
    <property type="entry name" value="DsbB"/>
</dbReference>
<dbReference type="InterPro" id="IPR023380">
    <property type="entry name" value="DsbB-like_sf"/>
</dbReference>
<dbReference type="PANTHER" id="PTHR36570">
    <property type="entry name" value="DISULFIDE BOND FORMATION PROTEIN B"/>
    <property type="match status" value="1"/>
</dbReference>
<dbReference type="PANTHER" id="PTHR36570:SF3">
    <property type="entry name" value="DISULFIDE BOND FORMATION PROTEIN B"/>
    <property type="match status" value="1"/>
</dbReference>
<dbReference type="Pfam" id="PF02600">
    <property type="entry name" value="DsbB"/>
    <property type="match status" value="1"/>
</dbReference>
<dbReference type="SUPFAM" id="SSF158442">
    <property type="entry name" value="DsbB-like"/>
    <property type="match status" value="1"/>
</dbReference>
<accession>A5WBG4</accession>
<feature type="chain" id="PRO_1000071941" description="Disulfide bond formation protein B">
    <location>
        <begin position="1"/>
        <end position="171"/>
    </location>
</feature>
<feature type="topological domain" description="Cytoplasmic" evidence="1">
    <location>
        <begin position="1"/>
        <end position="10"/>
    </location>
</feature>
<feature type="transmembrane region" description="Helical" evidence="1">
    <location>
        <begin position="11"/>
        <end position="27"/>
    </location>
</feature>
<feature type="topological domain" description="Periplasmic" evidence="1">
    <location>
        <begin position="28"/>
        <end position="46"/>
    </location>
</feature>
<feature type="transmembrane region" description="Helical" evidence="1">
    <location>
        <begin position="47"/>
        <end position="63"/>
    </location>
</feature>
<feature type="topological domain" description="Cytoplasmic" evidence="1">
    <location>
        <begin position="64"/>
        <end position="70"/>
    </location>
</feature>
<feature type="transmembrane region" description="Helical" evidence="1">
    <location>
        <begin position="71"/>
        <end position="88"/>
    </location>
</feature>
<feature type="topological domain" description="Periplasmic" evidence="1">
    <location>
        <begin position="89"/>
        <end position="145"/>
    </location>
</feature>
<feature type="transmembrane region" description="Helical" evidence="1">
    <location>
        <begin position="146"/>
        <end position="164"/>
    </location>
</feature>
<feature type="topological domain" description="Cytoplasmic" evidence="1">
    <location>
        <begin position="165"/>
        <end position="171"/>
    </location>
</feature>
<feature type="disulfide bond" description="Redox-active" evidence="1">
    <location>
        <begin position="38"/>
        <end position="41"/>
    </location>
</feature>
<feature type="disulfide bond" description="Redox-active" evidence="1">
    <location>
        <begin position="104"/>
        <end position="131"/>
    </location>
</feature>